<name>KIFC1_RAT</name>
<feature type="chain" id="PRO_0000302090" description="Kinesin-like protein KIFC1">
    <location>
        <begin position="1"/>
        <end position="693"/>
    </location>
</feature>
<feature type="domain" description="Kinesin motor" evidence="5">
    <location>
        <begin position="330"/>
        <end position="683"/>
    </location>
</feature>
<feature type="region of interest" description="Disordered" evidence="6">
    <location>
        <begin position="1"/>
        <end position="24"/>
    </location>
</feature>
<feature type="region of interest" description="Disordered" evidence="6">
    <location>
        <begin position="48"/>
        <end position="156"/>
    </location>
</feature>
<feature type="coiled-coil region" evidence="4">
    <location>
        <begin position="165"/>
        <end position="334"/>
    </location>
</feature>
<feature type="compositionally biased region" description="Low complexity" evidence="6">
    <location>
        <begin position="49"/>
        <end position="59"/>
    </location>
</feature>
<feature type="compositionally biased region" description="Low complexity" evidence="6">
    <location>
        <begin position="127"/>
        <end position="138"/>
    </location>
</feature>
<feature type="binding site" evidence="5">
    <location>
        <begin position="430"/>
        <end position="437"/>
    </location>
    <ligand>
        <name>ATP</name>
        <dbReference type="ChEBI" id="CHEBI:30616"/>
    </ligand>
</feature>
<feature type="modified residue" description="Phosphoserine" evidence="2">
    <location>
        <position position="52"/>
    </location>
</feature>
<feature type="modified residue" description="Phosphoserine" evidence="2">
    <location>
        <position position="59"/>
    </location>
</feature>
<feature type="modified residue" description="Phosphothreonine" evidence="2">
    <location>
        <position position="379"/>
    </location>
</feature>
<dbReference type="EMBL" id="BC083827">
    <property type="protein sequence ID" value="AAH83827.1"/>
    <property type="molecule type" value="mRNA"/>
</dbReference>
<dbReference type="EMBL" id="AF035951">
    <property type="protein sequence ID" value="AAB88699.1"/>
    <property type="molecule type" value="mRNA"/>
</dbReference>
<dbReference type="RefSeq" id="NP_001005878.1">
    <property type="nucleotide sequence ID" value="NM_001005878.1"/>
</dbReference>
<dbReference type="SMR" id="Q5XI63"/>
<dbReference type="FunCoup" id="Q5XI63">
    <property type="interactions" value="1691"/>
</dbReference>
<dbReference type="STRING" id="10116.ENSRNOP00000061875"/>
<dbReference type="PhosphoSitePlus" id="Q5XI63"/>
<dbReference type="PaxDb" id="10116-ENSRNOP00000061875"/>
<dbReference type="GeneID" id="294286"/>
<dbReference type="KEGG" id="rno:294286"/>
<dbReference type="UCSC" id="RGD:1359118">
    <property type="organism name" value="rat"/>
</dbReference>
<dbReference type="AGR" id="RGD:1359118"/>
<dbReference type="CTD" id="3833"/>
<dbReference type="RGD" id="1359118">
    <property type="gene designation" value="Kifc1"/>
</dbReference>
<dbReference type="VEuPathDB" id="HostDB:ENSRNOG00000000479"/>
<dbReference type="eggNOG" id="KOG0239">
    <property type="taxonomic scope" value="Eukaryota"/>
</dbReference>
<dbReference type="HOGENOM" id="CLU_001485_12_4_1"/>
<dbReference type="InParanoid" id="Q5XI63"/>
<dbReference type="OrthoDB" id="72024at9989"/>
<dbReference type="PhylomeDB" id="Q5XI63"/>
<dbReference type="Reactome" id="R-RNO-2132295">
    <property type="pathway name" value="MHC class II antigen presentation"/>
</dbReference>
<dbReference type="Reactome" id="R-RNO-6811434">
    <property type="pathway name" value="COPI-dependent Golgi-to-ER retrograde traffic"/>
</dbReference>
<dbReference type="Reactome" id="R-RNO-983189">
    <property type="pathway name" value="Kinesins"/>
</dbReference>
<dbReference type="PRO" id="PR:Q5XI63"/>
<dbReference type="Proteomes" id="UP000002494">
    <property type="component" value="Chromosome 20"/>
</dbReference>
<dbReference type="Bgee" id="ENSRNOG00000000479">
    <property type="expression patterns" value="Expressed in thymus and 18 other cell types or tissues"/>
</dbReference>
<dbReference type="GO" id="GO:0005737">
    <property type="term" value="C:cytoplasm"/>
    <property type="evidence" value="ECO:0000318"/>
    <property type="project" value="GO_Central"/>
</dbReference>
<dbReference type="GO" id="GO:0005769">
    <property type="term" value="C:early endosome"/>
    <property type="evidence" value="ECO:0007669"/>
    <property type="project" value="UniProtKB-SubCell"/>
</dbReference>
<dbReference type="GO" id="GO:0030139">
    <property type="term" value="C:endocytic vesicle"/>
    <property type="evidence" value="ECO:0000266"/>
    <property type="project" value="RGD"/>
</dbReference>
<dbReference type="GO" id="GO:0005871">
    <property type="term" value="C:kinesin complex"/>
    <property type="evidence" value="ECO:0000318"/>
    <property type="project" value="GO_Central"/>
</dbReference>
<dbReference type="GO" id="GO:0005874">
    <property type="term" value="C:microtubule"/>
    <property type="evidence" value="ECO:0000318"/>
    <property type="project" value="GO_Central"/>
</dbReference>
<dbReference type="GO" id="GO:0005815">
    <property type="term" value="C:microtubule organizing center"/>
    <property type="evidence" value="ECO:0000318"/>
    <property type="project" value="GO_Central"/>
</dbReference>
<dbReference type="GO" id="GO:0072686">
    <property type="term" value="C:mitotic spindle"/>
    <property type="evidence" value="ECO:0000266"/>
    <property type="project" value="RGD"/>
</dbReference>
<dbReference type="GO" id="GO:0005634">
    <property type="term" value="C:nucleus"/>
    <property type="evidence" value="ECO:0000266"/>
    <property type="project" value="RGD"/>
</dbReference>
<dbReference type="GO" id="GO:0031616">
    <property type="term" value="C:spindle pole centrosome"/>
    <property type="evidence" value="ECO:0000266"/>
    <property type="project" value="RGD"/>
</dbReference>
<dbReference type="GO" id="GO:0005524">
    <property type="term" value="F:ATP binding"/>
    <property type="evidence" value="ECO:0007669"/>
    <property type="project" value="UniProtKB-KW"/>
</dbReference>
<dbReference type="GO" id="GO:0016887">
    <property type="term" value="F:ATP hydrolysis activity"/>
    <property type="evidence" value="ECO:0000318"/>
    <property type="project" value="GO_Central"/>
</dbReference>
<dbReference type="GO" id="GO:0008017">
    <property type="term" value="F:microtubule binding"/>
    <property type="evidence" value="ECO:0000318"/>
    <property type="project" value="GO_Central"/>
</dbReference>
<dbReference type="GO" id="GO:0003777">
    <property type="term" value="F:microtubule motor activity"/>
    <property type="evidence" value="ECO:0000318"/>
    <property type="project" value="GO_Central"/>
</dbReference>
<dbReference type="GO" id="GO:0008569">
    <property type="term" value="F:minus-end-directed microtubule motor activity"/>
    <property type="evidence" value="ECO:0000266"/>
    <property type="project" value="RGD"/>
</dbReference>
<dbReference type="GO" id="GO:0051301">
    <property type="term" value="P:cell division"/>
    <property type="evidence" value="ECO:0007669"/>
    <property type="project" value="UniProtKB-KW"/>
</dbReference>
<dbReference type="GO" id="GO:0007018">
    <property type="term" value="P:microtubule-based movement"/>
    <property type="evidence" value="ECO:0000318"/>
    <property type="project" value="GO_Central"/>
</dbReference>
<dbReference type="GO" id="GO:0072382">
    <property type="term" value="P:minus-end-directed vesicle transport along microtubule"/>
    <property type="evidence" value="ECO:0000266"/>
    <property type="project" value="RGD"/>
</dbReference>
<dbReference type="GO" id="GO:0007080">
    <property type="term" value="P:mitotic metaphase chromosome alignment"/>
    <property type="evidence" value="ECO:0000250"/>
    <property type="project" value="UniProtKB"/>
</dbReference>
<dbReference type="GO" id="GO:0090307">
    <property type="term" value="P:mitotic spindle assembly"/>
    <property type="evidence" value="ECO:0000250"/>
    <property type="project" value="UniProtKB"/>
</dbReference>
<dbReference type="GO" id="GO:0010826">
    <property type="term" value="P:negative regulation of centrosome duplication"/>
    <property type="evidence" value="ECO:0000266"/>
    <property type="project" value="RGD"/>
</dbReference>
<dbReference type="GO" id="GO:0007283">
    <property type="term" value="P:spermatogenesis"/>
    <property type="evidence" value="ECO:0000270"/>
    <property type="project" value="RGD"/>
</dbReference>
<dbReference type="GO" id="GO:0047496">
    <property type="term" value="P:vesicle transport along microtubule"/>
    <property type="evidence" value="ECO:0000266"/>
    <property type="project" value="RGD"/>
</dbReference>
<dbReference type="CDD" id="cd01366">
    <property type="entry name" value="KISc_C_terminal"/>
    <property type="match status" value="1"/>
</dbReference>
<dbReference type="FunFam" id="1.10.287.1490:FF:000008">
    <property type="entry name" value="Kinesin-like protein"/>
    <property type="match status" value="1"/>
</dbReference>
<dbReference type="FunFam" id="3.40.850.10:FF:000046">
    <property type="entry name" value="Kinesin-like protein"/>
    <property type="match status" value="1"/>
</dbReference>
<dbReference type="Gene3D" id="1.10.287.1490">
    <property type="match status" value="1"/>
</dbReference>
<dbReference type="Gene3D" id="3.40.850.10">
    <property type="entry name" value="Kinesin motor domain"/>
    <property type="match status" value="1"/>
</dbReference>
<dbReference type="InterPro" id="IPR027640">
    <property type="entry name" value="Kinesin-like_fam"/>
</dbReference>
<dbReference type="InterPro" id="IPR019821">
    <property type="entry name" value="Kinesin_motor_CS"/>
</dbReference>
<dbReference type="InterPro" id="IPR001752">
    <property type="entry name" value="Kinesin_motor_dom"/>
</dbReference>
<dbReference type="InterPro" id="IPR036961">
    <property type="entry name" value="Kinesin_motor_dom_sf"/>
</dbReference>
<dbReference type="InterPro" id="IPR027417">
    <property type="entry name" value="P-loop_NTPase"/>
</dbReference>
<dbReference type="PANTHER" id="PTHR47972">
    <property type="entry name" value="KINESIN-LIKE PROTEIN KLP-3"/>
    <property type="match status" value="1"/>
</dbReference>
<dbReference type="PANTHER" id="PTHR47972:SF45">
    <property type="entry name" value="PROTEIN CLARET SEGREGATIONAL"/>
    <property type="match status" value="1"/>
</dbReference>
<dbReference type="Pfam" id="PF00225">
    <property type="entry name" value="Kinesin"/>
    <property type="match status" value="1"/>
</dbReference>
<dbReference type="PRINTS" id="PR00380">
    <property type="entry name" value="KINESINHEAVY"/>
</dbReference>
<dbReference type="SMART" id="SM00129">
    <property type="entry name" value="KISc"/>
    <property type="match status" value="1"/>
</dbReference>
<dbReference type="SUPFAM" id="SSF52540">
    <property type="entry name" value="P-loop containing nucleoside triphosphate hydrolases"/>
    <property type="match status" value="1"/>
</dbReference>
<dbReference type="SUPFAM" id="SSF57997">
    <property type="entry name" value="Tropomyosin"/>
    <property type="match status" value="1"/>
</dbReference>
<dbReference type="PROSITE" id="PS00411">
    <property type="entry name" value="KINESIN_MOTOR_1"/>
    <property type="match status" value="1"/>
</dbReference>
<dbReference type="PROSITE" id="PS50067">
    <property type="entry name" value="KINESIN_MOTOR_2"/>
    <property type="match status" value="1"/>
</dbReference>
<organism>
    <name type="scientific">Rattus norvegicus</name>
    <name type="common">Rat</name>
    <dbReference type="NCBI Taxonomy" id="10116"/>
    <lineage>
        <taxon>Eukaryota</taxon>
        <taxon>Metazoa</taxon>
        <taxon>Chordata</taxon>
        <taxon>Craniata</taxon>
        <taxon>Vertebrata</taxon>
        <taxon>Euteleostomi</taxon>
        <taxon>Mammalia</taxon>
        <taxon>Eutheria</taxon>
        <taxon>Euarchontoglires</taxon>
        <taxon>Glires</taxon>
        <taxon>Rodentia</taxon>
        <taxon>Myomorpha</taxon>
        <taxon>Muroidea</taxon>
        <taxon>Muridae</taxon>
        <taxon>Murinae</taxon>
        <taxon>Rattus</taxon>
    </lineage>
</organism>
<proteinExistence type="evidence at transcript level"/>
<keyword id="KW-0067">ATP-binding</keyword>
<keyword id="KW-0131">Cell cycle</keyword>
<keyword id="KW-0132">Cell division</keyword>
<keyword id="KW-0175">Coiled coil</keyword>
<keyword id="KW-0963">Cytoplasm</keyword>
<keyword id="KW-0206">Cytoskeleton</keyword>
<keyword id="KW-0967">Endosome</keyword>
<keyword id="KW-0493">Microtubule</keyword>
<keyword id="KW-0498">Mitosis</keyword>
<keyword id="KW-0505">Motor protein</keyword>
<keyword id="KW-0547">Nucleotide-binding</keyword>
<keyword id="KW-0539">Nucleus</keyword>
<keyword id="KW-0597">Phosphoprotein</keyword>
<keyword id="KW-1185">Reference proteome</keyword>
<sequence>MRGRGSRDTGTQSAAFASRPVRTTVDMQAQRAPLMEVKRNLELSTTLVKSSSRLPLPGSRLKRGPDQMEDGLEPAKKRTRGMGTVTKVDTSRPRGPPLSAVSTAAQKGPRKTGPRGCSAVGPVLRNQKPAPAAPAQKPGTSTAPAVAGKKPGKRPAWDLKGQLCDLHEELKQYREKTQTLDRENQGLREQLREVQEQATTLGTERNTLEEELASVRRRAEQSQQKLETLGARVLELEECLGTKERLVQELQTERLQLQEERSTLSTQLEEREREFQASEAALSSSRAEVLCLRQKTAAQVTLLAEQGDRLYGLEMERRRLHNQLQELKGNIRVFCRVRPVLEGESTPSPGFLVFPPGPAGPSDPPTRLCLSRSDDRRSTLTRAPAAATRHDFSFDRVFPPGSKQEEVFEEISMLVQSALDGYPVCIFAYGQTGSGKTFTMEGGPRGDPQLEGLIPRAMRHLFSVAQEMSGQGWTYSFVASYVEIYNETVRDLLATGTRKGQGGDCEIRRAGPGSEELTVTNARYVPVSCEKEVEALLHLAQQNRAVARTAQNERSSRSHSVFQLQISGEHAARGLQCGAPLNLVDLAGSERLDPGLTLGPGERDRLRETQAINSSLSTLGLVIMALSNKESHVPYRNSKLTYLLQNSLGGSAKMLMFVNISPLEENVSESLNSLRFASKVNQCVIGTAQANKK</sequence>
<gene>
    <name evidence="9 10" type="primary">Kifc1</name>
    <name evidence="8" type="synonym">Krp1</name>
</gene>
<reference evidence="9" key="1">
    <citation type="journal article" date="2004" name="Genome Res.">
        <title>The status, quality, and expansion of the NIH full-length cDNA project: the Mammalian Gene Collection (MGC).</title>
        <authorList>
            <consortium name="The MGC Project Team"/>
        </authorList>
    </citation>
    <scope>NUCLEOTIDE SEQUENCE [LARGE SCALE MRNA]</scope>
    <source>
        <tissue evidence="9">Testis</tissue>
    </source>
</reference>
<reference evidence="7 8" key="2">
    <citation type="journal article" date="1996" name="Mol. Biol. Cell">
        <title>Kinesin-related proteins in the mammalian testes: candidate motors for meiosis and morphogenesis.</title>
        <authorList>
            <person name="Sperry A.O."/>
            <person name="Zhao L.-P."/>
        </authorList>
    </citation>
    <scope>NUCLEOTIDE SEQUENCE [MRNA] OF 426-588</scope>
    <source>
        <strain evidence="8">Sprague-Dawley</strain>
        <tissue evidence="8">Testis</tissue>
    </source>
</reference>
<comment type="function">
    <text evidence="3">Minus end-directed microtubule-dependent motor required for bipolar spindle formation. May contribute to movement of early endocytic vesicles. Regulates cilium formation and structure.</text>
</comment>
<comment type="subunit">
    <text evidence="1">Binds NUBP1 and NUBP2. Interacts with PPP1R42 (By similarity).</text>
</comment>
<comment type="subcellular location">
    <subcellularLocation>
        <location evidence="3">Nucleus</location>
    </subcellularLocation>
    <subcellularLocation>
        <location evidence="3">Cytoplasm</location>
        <location evidence="3">Cytoskeleton</location>
        <location evidence="3">Microtubule organizing center</location>
        <location evidence="3">Centrosome</location>
    </subcellularLocation>
    <subcellularLocation>
        <location evidence="3">Cytoplasm</location>
        <location evidence="3">Cytoskeleton</location>
        <location evidence="3">Spindle</location>
    </subcellularLocation>
    <subcellularLocation>
        <location evidence="3">Early endosome</location>
    </subcellularLocation>
    <text evidence="3">Associated with nucleus during interphase, centrosomes in early and spindle in later mitosis.</text>
</comment>
<comment type="similarity">
    <text evidence="5">Belongs to the TRAFAC class myosin-kinesin ATPase superfamily. Kinesin family. NCD subfamily.</text>
</comment>
<evidence type="ECO:0000250" key="1"/>
<evidence type="ECO:0000250" key="2">
    <source>
        <dbReference type="UniProtKB" id="Q9BW19"/>
    </source>
</evidence>
<evidence type="ECO:0000250" key="3">
    <source>
        <dbReference type="UniProtKB" id="Q9QWT9"/>
    </source>
</evidence>
<evidence type="ECO:0000255" key="4"/>
<evidence type="ECO:0000255" key="5">
    <source>
        <dbReference type="PROSITE-ProRule" id="PRU00283"/>
    </source>
</evidence>
<evidence type="ECO:0000256" key="6">
    <source>
        <dbReference type="SAM" id="MobiDB-lite"/>
    </source>
</evidence>
<evidence type="ECO:0000305" key="7"/>
<evidence type="ECO:0000312" key="8">
    <source>
        <dbReference type="EMBL" id="AAB88699.1"/>
    </source>
</evidence>
<evidence type="ECO:0000312" key="9">
    <source>
        <dbReference type="EMBL" id="AAH83827.1"/>
    </source>
</evidence>
<evidence type="ECO:0000312" key="10">
    <source>
        <dbReference type="RGD" id="1359118"/>
    </source>
</evidence>
<protein>
    <recommendedName>
        <fullName>Kinesin-like protein KIFC1</fullName>
    </recommendedName>
    <alternativeName>
        <fullName>Kinesin-related protein 1</fullName>
    </alternativeName>
</protein>
<accession>Q5XI63</accession>
<accession>O54719</accession>